<proteinExistence type="inferred from homology"/>
<dbReference type="EMBL" id="CU928158">
    <property type="protein sequence ID" value="CAQ90793.1"/>
    <property type="molecule type" value="Genomic_DNA"/>
</dbReference>
<dbReference type="RefSeq" id="WP_000820733.1">
    <property type="nucleotide sequence ID" value="NC_011740.1"/>
</dbReference>
<dbReference type="SMR" id="B7LS50"/>
<dbReference type="GeneID" id="75060076"/>
<dbReference type="KEGG" id="efe:EFER_3314"/>
<dbReference type="HOGENOM" id="CLU_155943_1_0_6"/>
<dbReference type="OrthoDB" id="9789418at2"/>
<dbReference type="Proteomes" id="UP000000745">
    <property type="component" value="Chromosome"/>
</dbReference>
<dbReference type="GO" id="GO:0005737">
    <property type="term" value="C:cytoplasm"/>
    <property type="evidence" value="ECO:0007669"/>
    <property type="project" value="UniProtKB-SubCell"/>
</dbReference>
<dbReference type="GO" id="GO:0008033">
    <property type="term" value="P:tRNA processing"/>
    <property type="evidence" value="ECO:0007669"/>
    <property type="project" value="UniProtKB-UniRule"/>
</dbReference>
<dbReference type="FunFam" id="3.40.1260.10:FF:000004">
    <property type="entry name" value="Sulfurtransferase TusC"/>
    <property type="match status" value="1"/>
</dbReference>
<dbReference type="Gene3D" id="3.40.1260.10">
    <property type="entry name" value="DsrEFH-like"/>
    <property type="match status" value="1"/>
</dbReference>
<dbReference type="HAMAP" id="MF_00389">
    <property type="entry name" value="Thiourid_synth_C"/>
    <property type="match status" value="1"/>
</dbReference>
<dbReference type="InterPro" id="IPR027396">
    <property type="entry name" value="DsrEFH-like"/>
</dbReference>
<dbReference type="InterPro" id="IPR003787">
    <property type="entry name" value="Sulphur_relay_DsrE/F-like"/>
</dbReference>
<dbReference type="InterPro" id="IPR037450">
    <property type="entry name" value="Sulphur_relay_TusC"/>
</dbReference>
<dbReference type="InterPro" id="IPR017462">
    <property type="entry name" value="Sulphur_relay_TusC/DsrF"/>
</dbReference>
<dbReference type="NCBIfam" id="NF001238">
    <property type="entry name" value="PRK00211.1"/>
    <property type="match status" value="1"/>
</dbReference>
<dbReference type="NCBIfam" id="TIGR03010">
    <property type="entry name" value="sulf_tusC_dsrF"/>
    <property type="match status" value="1"/>
</dbReference>
<dbReference type="PANTHER" id="PTHR38780">
    <property type="entry name" value="PROTEIN TUSC"/>
    <property type="match status" value="1"/>
</dbReference>
<dbReference type="PANTHER" id="PTHR38780:SF1">
    <property type="entry name" value="PROTEIN TUSC"/>
    <property type="match status" value="1"/>
</dbReference>
<dbReference type="Pfam" id="PF02635">
    <property type="entry name" value="DsrE"/>
    <property type="match status" value="1"/>
</dbReference>
<dbReference type="SUPFAM" id="SSF75169">
    <property type="entry name" value="DsrEFH-like"/>
    <property type="match status" value="1"/>
</dbReference>
<protein>
    <recommendedName>
        <fullName evidence="1">Protein TusC</fullName>
    </recommendedName>
    <alternativeName>
        <fullName evidence="1">tRNA 2-thiouridine synthesizing protein C</fullName>
    </alternativeName>
</protein>
<evidence type="ECO:0000255" key="1">
    <source>
        <dbReference type="HAMAP-Rule" id="MF_00389"/>
    </source>
</evidence>
<reference key="1">
    <citation type="journal article" date="2009" name="PLoS Genet.">
        <title>Organised genome dynamics in the Escherichia coli species results in highly diverse adaptive paths.</title>
        <authorList>
            <person name="Touchon M."/>
            <person name="Hoede C."/>
            <person name="Tenaillon O."/>
            <person name="Barbe V."/>
            <person name="Baeriswyl S."/>
            <person name="Bidet P."/>
            <person name="Bingen E."/>
            <person name="Bonacorsi S."/>
            <person name="Bouchier C."/>
            <person name="Bouvet O."/>
            <person name="Calteau A."/>
            <person name="Chiapello H."/>
            <person name="Clermont O."/>
            <person name="Cruveiller S."/>
            <person name="Danchin A."/>
            <person name="Diard M."/>
            <person name="Dossat C."/>
            <person name="Karoui M.E."/>
            <person name="Frapy E."/>
            <person name="Garry L."/>
            <person name="Ghigo J.M."/>
            <person name="Gilles A.M."/>
            <person name="Johnson J."/>
            <person name="Le Bouguenec C."/>
            <person name="Lescat M."/>
            <person name="Mangenot S."/>
            <person name="Martinez-Jehanne V."/>
            <person name="Matic I."/>
            <person name="Nassif X."/>
            <person name="Oztas S."/>
            <person name="Petit M.A."/>
            <person name="Pichon C."/>
            <person name="Rouy Z."/>
            <person name="Ruf C.S."/>
            <person name="Schneider D."/>
            <person name="Tourret J."/>
            <person name="Vacherie B."/>
            <person name="Vallenet D."/>
            <person name="Medigue C."/>
            <person name="Rocha E.P.C."/>
            <person name="Denamur E."/>
        </authorList>
    </citation>
    <scope>NUCLEOTIDE SEQUENCE [LARGE SCALE GENOMIC DNA]</scope>
    <source>
        <strain>ATCC 35469 / DSM 13698 / BCRC 15582 / CCUG 18766 / IAM 14443 / JCM 21226 / LMG 7866 / NBRC 102419 / NCTC 12128 / CDC 0568-73</strain>
    </source>
</reference>
<gene>
    <name evidence="1" type="primary">tusC</name>
    <name type="ordered locus">EFER_3314</name>
</gene>
<accession>B7LS50</accession>
<comment type="function">
    <text evidence="1">Part of a sulfur-relay system required for 2-thiolation of 5-methylaminomethyl-2-thiouridine (mnm(5)s(2)U) at tRNA wobble positions.</text>
</comment>
<comment type="subunit">
    <text evidence="1">Heterohexamer, formed by a dimer of trimers. The hexameric TusBCD complex contains 2 copies each of TusB, TusC and TusD. The TusBCD complex interacts with TusE.</text>
</comment>
<comment type="subcellular location">
    <subcellularLocation>
        <location evidence="1">Cytoplasm</location>
    </subcellularLocation>
</comment>
<comment type="similarity">
    <text evidence="1">Belongs to the DsrF/TusC family.</text>
</comment>
<keyword id="KW-0963">Cytoplasm</keyword>
<keyword id="KW-0819">tRNA processing</keyword>
<feature type="chain" id="PRO_1000122842" description="Protein TusC">
    <location>
        <begin position="1"/>
        <end position="119"/>
    </location>
</feature>
<name>TUSC_ESCF3</name>
<sequence>MKRIAFVFSTTPHGTAAGREGLDALLATSALTDELAVFFIADGVFQLLPGQKPDTVLARDYIATFKLLGLYDIEQCWVCAASLRERGLDPQTSFVVEATPLEADALRRELANYDVILRF</sequence>
<organism>
    <name type="scientific">Escherichia fergusonii (strain ATCC 35469 / DSM 13698 / CCUG 18766 / IAM 14443 / JCM 21226 / LMG 7866 / NBRC 102419 / NCTC 12128 / CDC 0568-73)</name>
    <dbReference type="NCBI Taxonomy" id="585054"/>
    <lineage>
        <taxon>Bacteria</taxon>
        <taxon>Pseudomonadati</taxon>
        <taxon>Pseudomonadota</taxon>
        <taxon>Gammaproteobacteria</taxon>
        <taxon>Enterobacterales</taxon>
        <taxon>Enterobacteriaceae</taxon>
        <taxon>Escherichia</taxon>
    </lineage>
</organism>